<gene>
    <name type="ordered locus">Bcep1808_7604</name>
</gene>
<name>ACDH2_BURVG</name>
<reference key="1">
    <citation type="submission" date="2007-03" db="EMBL/GenBank/DDBJ databases">
        <title>Complete sequence of plasmid pBVIE04 of Burkholderia vietnamiensis G4.</title>
        <authorList>
            <consortium name="US DOE Joint Genome Institute"/>
            <person name="Copeland A."/>
            <person name="Lucas S."/>
            <person name="Lapidus A."/>
            <person name="Barry K."/>
            <person name="Detter J.C."/>
            <person name="Glavina del Rio T."/>
            <person name="Hammon N."/>
            <person name="Israni S."/>
            <person name="Dalin E."/>
            <person name="Tice H."/>
            <person name="Pitluck S."/>
            <person name="Chain P."/>
            <person name="Malfatti S."/>
            <person name="Shin M."/>
            <person name="Vergez L."/>
            <person name="Schmutz J."/>
            <person name="Larimer F."/>
            <person name="Land M."/>
            <person name="Hauser L."/>
            <person name="Kyrpides N."/>
            <person name="Tiedje J."/>
            <person name="Richardson P."/>
        </authorList>
    </citation>
    <scope>NUCLEOTIDE SEQUENCE [LARGE SCALE GENOMIC DNA]</scope>
    <source>
        <strain>G4 / LMG 22486</strain>
    </source>
</reference>
<sequence length="303" mass="32376">MKKIKCALIGPGNIGTDLLAKLKRSSVLEPVWMVGIDPESEGLKRARELGVKTTAEGVDGLLPHVLADGVQIAFDATSAYVHAENARKLNALGVMMIDLTPAAIGPYCVPPVNLKEHLGKREMNVNMVTCGGQATIPMVAAVSRVQPVAYAEIVATVSSRSVGPGTRKNIDEFTRTTAGAVEKVGGARKGKAIIIINPAEPPLMMRDTIHCLTETEPDQQRITESIHAMIEEVQKYVPGYRLVNGPVFDGKRVTVFMEVAGLGDYLPTYAGNLDIMTAAAARTAEMFAEEMIAGNLTLEPVVA</sequence>
<protein>
    <recommendedName>
        <fullName evidence="1">Acetaldehyde dehydrogenase 2</fullName>
        <ecNumber evidence="1">1.2.1.10</ecNumber>
    </recommendedName>
    <alternativeName>
        <fullName evidence="1">Acetaldehyde dehydrogenase [acetylating] 2</fullName>
    </alternativeName>
</protein>
<comment type="catalytic activity">
    <reaction evidence="1">
        <text>acetaldehyde + NAD(+) + CoA = acetyl-CoA + NADH + H(+)</text>
        <dbReference type="Rhea" id="RHEA:23288"/>
        <dbReference type="ChEBI" id="CHEBI:15343"/>
        <dbReference type="ChEBI" id="CHEBI:15378"/>
        <dbReference type="ChEBI" id="CHEBI:57287"/>
        <dbReference type="ChEBI" id="CHEBI:57288"/>
        <dbReference type="ChEBI" id="CHEBI:57540"/>
        <dbReference type="ChEBI" id="CHEBI:57945"/>
        <dbReference type="EC" id="1.2.1.10"/>
    </reaction>
</comment>
<comment type="similarity">
    <text evidence="1">Belongs to the acetaldehyde dehydrogenase family.</text>
</comment>
<geneLocation type="plasmid">
    <name>pBVIE04</name>
</geneLocation>
<evidence type="ECO:0000255" key="1">
    <source>
        <dbReference type="HAMAP-Rule" id="MF_01657"/>
    </source>
</evidence>
<feature type="chain" id="PRO_0000387643" description="Acetaldehyde dehydrogenase 2">
    <location>
        <begin position="1"/>
        <end position="303"/>
    </location>
</feature>
<feature type="active site" description="Acyl-thioester intermediate" evidence="1">
    <location>
        <position position="130"/>
    </location>
</feature>
<feature type="binding site" evidence="1">
    <location>
        <begin position="161"/>
        <end position="169"/>
    </location>
    <ligand>
        <name>NAD(+)</name>
        <dbReference type="ChEBI" id="CHEBI:57540"/>
    </ligand>
</feature>
<feature type="binding site" evidence="1">
    <location>
        <position position="272"/>
    </location>
    <ligand>
        <name>NAD(+)</name>
        <dbReference type="ChEBI" id="CHEBI:57540"/>
    </ligand>
</feature>
<accession>A4JW24</accession>
<keyword id="KW-0058">Aromatic hydrocarbons catabolism</keyword>
<keyword id="KW-0520">NAD</keyword>
<keyword id="KW-0560">Oxidoreductase</keyword>
<keyword id="KW-0614">Plasmid</keyword>
<organism>
    <name type="scientific">Burkholderia vietnamiensis (strain G4 / LMG 22486)</name>
    <name type="common">Burkholderia cepacia (strain R1808)</name>
    <dbReference type="NCBI Taxonomy" id="269482"/>
    <lineage>
        <taxon>Bacteria</taxon>
        <taxon>Pseudomonadati</taxon>
        <taxon>Pseudomonadota</taxon>
        <taxon>Betaproteobacteria</taxon>
        <taxon>Burkholderiales</taxon>
        <taxon>Burkholderiaceae</taxon>
        <taxon>Burkholderia</taxon>
        <taxon>Burkholderia cepacia complex</taxon>
    </lineage>
</organism>
<dbReference type="EC" id="1.2.1.10" evidence="1"/>
<dbReference type="EMBL" id="CP000620">
    <property type="protein sequence ID" value="ABO60477.1"/>
    <property type="molecule type" value="Genomic_DNA"/>
</dbReference>
<dbReference type="SMR" id="A4JW24"/>
<dbReference type="KEGG" id="bvi:Bcep1808_7604"/>
<dbReference type="eggNOG" id="COG4569">
    <property type="taxonomic scope" value="Bacteria"/>
</dbReference>
<dbReference type="HOGENOM" id="CLU_062208_0_0_4"/>
<dbReference type="Proteomes" id="UP000002287">
    <property type="component" value="Plasmid pBVIE04"/>
</dbReference>
<dbReference type="GO" id="GO:0008774">
    <property type="term" value="F:acetaldehyde dehydrogenase (acetylating) activity"/>
    <property type="evidence" value="ECO:0007669"/>
    <property type="project" value="UniProtKB-UniRule"/>
</dbReference>
<dbReference type="GO" id="GO:0051287">
    <property type="term" value="F:NAD binding"/>
    <property type="evidence" value="ECO:0007669"/>
    <property type="project" value="UniProtKB-UniRule"/>
</dbReference>
<dbReference type="GO" id="GO:0009056">
    <property type="term" value="P:catabolic process"/>
    <property type="evidence" value="ECO:0007669"/>
    <property type="project" value="UniProtKB-KW"/>
</dbReference>
<dbReference type="CDD" id="cd23933">
    <property type="entry name" value="ALDH_C"/>
    <property type="match status" value="1"/>
</dbReference>
<dbReference type="Gene3D" id="3.30.360.10">
    <property type="entry name" value="Dihydrodipicolinate Reductase, domain 2"/>
    <property type="match status" value="1"/>
</dbReference>
<dbReference type="Gene3D" id="3.40.50.720">
    <property type="entry name" value="NAD(P)-binding Rossmann-like Domain"/>
    <property type="match status" value="1"/>
</dbReference>
<dbReference type="HAMAP" id="MF_01657">
    <property type="entry name" value="Ac_ald_DH_ac"/>
    <property type="match status" value="1"/>
</dbReference>
<dbReference type="InterPro" id="IPR003361">
    <property type="entry name" value="Acetaldehyde_dehydrogenase"/>
</dbReference>
<dbReference type="InterPro" id="IPR015426">
    <property type="entry name" value="Acetylaldehyde_DH_C"/>
</dbReference>
<dbReference type="InterPro" id="IPR036291">
    <property type="entry name" value="NAD(P)-bd_dom_sf"/>
</dbReference>
<dbReference type="InterPro" id="IPR000534">
    <property type="entry name" value="Semialdehyde_DH_NAD-bd"/>
</dbReference>
<dbReference type="NCBIfam" id="TIGR03215">
    <property type="entry name" value="ac_ald_DH_ac"/>
    <property type="match status" value="1"/>
</dbReference>
<dbReference type="NCBIfam" id="NF006157">
    <property type="entry name" value="PRK08300.1"/>
    <property type="match status" value="1"/>
</dbReference>
<dbReference type="Pfam" id="PF09290">
    <property type="entry name" value="AcetDehyd-dimer"/>
    <property type="match status" value="1"/>
</dbReference>
<dbReference type="Pfam" id="PF01118">
    <property type="entry name" value="Semialdhyde_dh"/>
    <property type="match status" value="1"/>
</dbReference>
<dbReference type="PIRSF" id="PIRSF015689">
    <property type="entry name" value="Actaldh_dh_actl"/>
    <property type="match status" value="1"/>
</dbReference>
<dbReference type="SMART" id="SM00859">
    <property type="entry name" value="Semialdhyde_dh"/>
    <property type="match status" value="1"/>
</dbReference>
<dbReference type="SUPFAM" id="SSF55347">
    <property type="entry name" value="Glyceraldehyde-3-phosphate dehydrogenase-like, C-terminal domain"/>
    <property type="match status" value="1"/>
</dbReference>
<dbReference type="SUPFAM" id="SSF51735">
    <property type="entry name" value="NAD(P)-binding Rossmann-fold domains"/>
    <property type="match status" value="1"/>
</dbReference>
<proteinExistence type="inferred from homology"/>